<comment type="function">
    <text evidence="1">Catalyzes the conversion of dihydroorotate to orotate with quinone as electron acceptor.</text>
</comment>
<comment type="catalytic activity">
    <reaction evidence="1">
        <text>(S)-dihydroorotate + a quinone = orotate + a quinol</text>
        <dbReference type="Rhea" id="RHEA:30187"/>
        <dbReference type="ChEBI" id="CHEBI:24646"/>
        <dbReference type="ChEBI" id="CHEBI:30839"/>
        <dbReference type="ChEBI" id="CHEBI:30864"/>
        <dbReference type="ChEBI" id="CHEBI:132124"/>
        <dbReference type="EC" id="1.3.5.2"/>
    </reaction>
</comment>
<comment type="cofactor">
    <cofactor evidence="1">
        <name>FMN</name>
        <dbReference type="ChEBI" id="CHEBI:58210"/>
    </cofactor>
    <text evidence="1">Binds 1 FMN per subunit.</text>
</comment>
<comment type="pathway">
    <text evidence="1">Pyrimidine metabolism; UMP biosynthesis via de novo pathway; orotate from (S)-dihydroorotate (quinone route): step 1/1.</text>
</comment>
<comment type="subunit">
    <text evidence="1">Monomer.</text>
</comment>
<comment type="subcellular location">
    <subcellularLocation>
        <location evidence="1">Cell membrane</location>
        <topology evidence="1">Peripheral membrane protein</topology>
    </subcellularLocation>
</comment>
<comment type="similarity">
    <text evidence="1">Belongs to the dihydroorotate dehydrogenase family. Type 2 subfamily.</text>
</comment>
<keyword id="KW-1003">Cell membrane</keyword>
<keyword id="KW-0285">Flavoprotein</keyword>
<keyword id="KW-0288">FMN</keyword>
<keyword id="KW-0472">Membrane</keyword>
<keyword id="KW-0560">Oxidoreductase</keyword>
<keyword id="KW-0665">Pyrimidine biosynthesis</keyword>
<keyword id="KW-1185">Reference proteome</keyword>
<proteinExistence type="inferred from homology"/>
<dbReference type="EC" id="1.3.5.2" evidence="1"/>
<dbReference type="EMBL" id="CP000468">
    <property type="protein sequence ID" value="ABJ00355.1"/>
    <property type="molecule type" value="Genomic_DNA"/>
</dbReference>
<dbReference type="RefSeq" id="WP_001295934.1">
    <property type="nucleotide sequence ID" value="NZ_CADILS010000016.1"/>
</dbReference>
<dbReference type="SMR" id="A1A9L5"/>
<dbReference type="KEGG" id="ecv:APECO1_50"/>
<dbReference type="HOGENOM" id="CLU_013640_2_0_6"/>
<dbReference type="UniPathway" id="UPA00070">
    <property type="reaction ID" value="UER00946"/>
</dbReference>
<dbReference type="Proteomes" id="UP000008216">
    <property type="component" value="Chromosome"/>
</dbReference>
<dbReference type="GO" id="GO:0005737">
    <property type="term" value="C:cytoplasm"/>
    <property type="evidence" value="ECO:0007669"/>
    <property type="project" value="InterPro"/>
</dbReference>
<dbReference type="GO" id="GO:0005886">
    <property type="term" value="C:plasma membrane"/>
    <property type="evidence" value="ECO:0007669"/>
    <property type="project" value="UniProtKB-SubCell"/>
</dbReference>
<dbReference type="GO" id="GO:0106430">
    <property type="term" value="F:dihydroorotate dehydrogenase (quinone) activity"/>
    <property type="evidence" value="ECO:0007669"/>
    <property type="project" value="UniProtKB-EC"/>
</dbReference>
<dbReference type="GO" id="GO:0006207">
    <property type="term" value="P:'de novo' pyrimidine nucleobase biosynthetic process"/>
    <property type="evidence" value="ECO:0007669"/>
    <property type="project" value="InterPro"/>
</dbReference>
<dbReference type="GO" id="GO:0044205">
    <property type="term" value="P:'de novo' UMP biosynthetic process"/>
    <property type="evidence" value="ECO:0007669"/>
    <property type="project" value="UniProtKB-UniRule"/>
</dbReference>
<dbReference type="CDD" id="cd04738">
    <property type="entry name" value="DHOD_2_like"/>
    <property type="match status" value="1"/>
</dbReference>
<dbReference type="FunFam" id="3.20.20.70:FF:000028">
    <property type="entry name" value="Dihydroorotate dehydrogenase (quinone)"/>
    <property type="match status" value="1"/>
</dbReference>
<dbReference type="Gene3D" id="3.20.20.70">
    <property type="entry name" value="Aldolase class I"/>
    <property type="match status" value="1"/>
</dbReference>
<dbReference type="HAMAP" id="MF_00225">
    <property type="entry name" value="DHO_dh_type2"/>
    <property type="match status" value="1"/>
</dbReference>
<dbReference type="InterPro" id="IPR013785">
    <property type="entry name" value="Aldolase_TIM"/>
</dbReference>
<dbReference type="InterPro" id="IPR050074">
    <property type="entry name" value="DHO_dehydrogenase"/>
</dbReference>
<dbReference type="InterPro" id="IPR012135">
    <property type="entry name" value="Dihydroorotate_DH_1_2"/>
</dbReference>
<dbReference type="InterPro" id="IPR005719">
    <property type="entry name" value="Dihydroorotate_DH_2"/>
</dbReference>
<dbReference type="InterPro" id="IPR005720">
    <property type="entry name" value="Dihydroorotate_DH_cat"/>
</dbReference>
<dbReference type="InterPro" id="IPR001295">
    <property type="entry name" value="Dihydroorotate_DH_CS"/>
</dbReference>
<dbReference type="NCBIfam" id="NF003644">
    <property type="entry name" value="PRK05286.1-1"/>
    <property type="match status" value="1"/>
</dbReference>
<dbReference type="NCBIfam" id="NF003645">
    <property type="entry name" value="PRK05286.1-2"/>
    <property type="match status" value="1"/>
</dbReference>
<dbReference type="NCBIfam" id="NF003646">
    <property type="entry name" value="PRK05286.1-4"/>
    <property type="match status" value="1"/>
</dbReference>
<dbReference type="NCBIfam" id="NF003652">
    <property type="entry name" value="PRK05286.2-5"/>
    <property type="match status" value="1"/>
</dbReference>
<dbReference type="NCBIfam" id="TIGR01036">
    <property type="entry name" value="pyrD_sub2"/>
    <property type="match status" value="1"/>
</dbReference>
<dbReference type="PANTHER" id="PTHR48109:SF4">
    <property type="entry name" value="DIHYDROOROTATE DEHYDROGENASE (QUINONE), MITOCHONDRIAL"/>
    <property type="match status" value="1"/>
</dbReference>
<dbReference type="PANTHER" id="PTHR48109">
    <property type="entry name" value="DIHYDROOROTATE DEHYDROGENASE (QUINONE), MITOCHONDRIAL-RELATED"/>
    <property type="match status" value="1"/>
</dbReference>
<dbReference type="Pfam" id="PF01180">
    <property type="entry name" value="DHO_dh"/>
    <property type="match status" value="1"/>
</dbReference>
<dbReference type="PIRSF" id="PIRSF000164">
    <property type="entry name" value="DHO_oxidase"/>
    <property type="match status" value="1"/>
</dbReference>
<dbReference type="SUPFAM" id="SSF51395">
    <property type="entry name" value="FMN-linked oxidoreductases"/>
    <property type="match status" value="1"/>
</dbReference>
<dbReference type="PROSITE" id="PS00911">
    <property type="entry name" value="DHODEHASE_1"/>
    <property type="match status" value="1"/>
</dbReference>
<dbReference type="PROSITE" id="PS00912">
    <property type="entry name" value="DHODEHASE_2"/>
    <property type="match status" value="1"/>
</dbReference>
<accession>A1A9L5</accession>
<sequence length="336" mass="36818">MYYPFVRKALFQLDPERAHEFTFQQLRRITGTPFEALVRQKVPAKPVNCMGLTFKNPLGLAAGLDKDGECIDALGAMGFGSIEIGTVTPRPQPGNDKPRLFRLVDAEGLINRMGFNNLGVDNLVENVKKAHYDGVLGINIGKNKDTPVEQGKDDYLICMEKIYAYAGYIAINISSPNTPGLRTLQYGEALDDLLTAIKNKQNDLQVMHHKYVPIAVKIAPDLSEEELIQVADSLVRHNIDGVIATNTTLDRSLVQGMKNCDQTGGLSGRPLQLKSTEIIRRLSQELNGRLPIIGVGGIDSVIAAREKIAAGASLVQIYSGFIFKGPPLIKEIVTHI</sequence>
<organism>
    <name type="scientific">Escherichia coli O1:K1 / APEC</name>
    <dbReference type="NCBI Taxonomy" id="405955"/>
    <lineage>
        <taxon>Bacteria</taxon>
        <taxon>Pseudomonadati</taxon>
        <taxon>Pseudomonadota</taxon>
        <taxon>Gammaproteobacteria</taxon>
        <taxon>Enterobacterales</taxon>
        <taxon>Enterobacteriaceae</taxon>
        <taxon>Escherichia</taxon>
    </lineage>
</organism>
<name>PYRD_ECOK1</name>
<protein>
    <recommendedName>
        <fullName evidence="1">Dihydroorotate dehydrogenase (quinone)</fullName>
        <ecNumber evidence="1">1.3.5.2</ecNumber>
    </recommendedName>
    <alternativeName>
        <fullName evidence="1">DHOdehase</fullName>
        <shortName evidence="1">DHOD</shortName>
        <shortName evidence="1">DHODase</shortName>
    </alternativeName>
    <alternativeName>
        <fullName evidence="1">Dihydroorotate oxidase</fullName>
    </alternativeName>
</protein>
<evidence type="ECO:0000255" key="1">
    <source>
        <dbReference type="HAMAP-Rule" id="MF_00225"/>
    </source>
</evidence>
<feature type="chain" id="PRO_1000024172" description="Dihydroorotate dehydrogenase (quinone)">
    <location>
        <begin position="1"/>
        <end position="336"/>
    </location>
</feature>
<feature type="active site" description="Nucleophile" evidence="1">
    <location>
        <position position="175"/>
    </location>
</feature>
<feature type="binding site" evidence="1">
    <location>
        <begin position="62"/>
        <end position="66"/>
    </location>
    <ligand>
        <name>FMN</name>
        <dbReference type="ChEBI" id="CHEBI:58210"/>
    </ligand>
</feature>
<feature type="binding site" evidence="1">
    <location>
        <position position="66"/>
    </location>
    <ligand>
        <name>substrate</name>
    </ligand>
</feature>
<feature type="binding site" evidence="1">
    <location>
        <position position="86"/>
    </location>
    <ligand>
        <name>FMN</name>
        <dbReference type="ChEBI" id="CHEBI:58210"/>
    </ligand>
</feature>
<feature type="binding site" evidence="1">
    <location>
        <begin position="111"/>
        <end position="115"/>
    </location>
    <ligand>
        <name>substrate</name>
    </ligand>
</feature>
<feature type="binding site" evidence="1">
    <location>
        <position position="139"/>
    </location>
    <ligand>
        <name>FMN</name>
        <dbReference type="ChEBI" id="CHEBI:58210"/>
    </ligand>
</feature>
<feature type="binding site" evidence="1">
    <location>
        <position position="172"/>
    </location>
    <ligand>
        <name>FMN</name>
        <dbReference type="ChEBI" id="CHEBI:58210"/>
    </ligand>
</feature>
<feature type="binding site" evidence="1">
    <location>
        <position position="172"/>
    </location>
    <ligand>
        <name>substrate</name>
    </ligand>
</feature>
<feature type="binding site" evidence="1">
    <location>
        <position position="177"/>
    </location>
    <ligand>
        <name>substrate</name>
    </ligand>
</feature>
<feature type="binding site" evidence="1">
    <location>
        <position position="217"/>
    </location>
    <ligand>
        <name>FMN</name>
        <dbReference type="ChEBI" id="CHEBI:58210"/>
    </ligand>
</feature>
<feature type="binding site" evidence="1">
    <location>
        <position position="245"/>
    </location>
    <ligand>
        <name>FMN</name>
        <dbReference type="ChEBI" id="CHEBI:58210"/>
    </ligand>
</feature>
<feature type="binding site" evidence="1">
    <location>
        <begin position="246"/>
        <end position="247"/>
    </location>
    <ligand>
        <name>substrate</name>
    </ligand>
</feature>
<feature type="binding site" evidence="1">
    <location>
        <position position="268"/>
    </location>
    <ligand>
        <name>FMN</name>
        <dbReference type="ChEBI" id="CHEBI:58210"/>
    </ligand>
</feature>
<feature type="binding site" evidence="1">
    <location>
        <position position="297"/>
    </location>
    <ligand>
        <name>FMN</name>
        <dbReference type="ChEBI" id="CHEBI:58210"/>
    </ligand>
</feature>
<feature type="binding site" evidence="1">
    <location>
        <begin position="318"/>
        <end position="319"/>
    </location>
    <ligand>
        <name>FMN</name>
        <dbReference type="ChEBI" id="CHEBI:58210"/>
    </ligand>
</feature>
<gene>
    <name evidence="1" type="primary">pyrD</name>
    <name type="ordered locus">Ecok1_08610</name>
    <name type="ORF">APECO1_50</name>
</gene>
<reference key="1">
    <citation type="journal article" date="2007" name="J. Bacteriol.">
        <title>The genome sequence of avian pathogenic Escherichia coli strain O1:K1:H7 shares strong similarities with human extraintestinal pathogenic E. coli genomes.</title>
        <authorList>
            <person name="Johnson T.J."/>
            <person name="Kariyawasam S."/>
            <person name="Wannemuehler Y."/>
            <person name="Mangiamele P."/>
            <person name="Johnson S.J."/>
            <person name="Doetkott C."/>
            <person name="Skyberg J.A."/>
            <person name="Lynne A.M."/>
            <person name="Johnson J.R."/>
            <person name="Nolan L.K."/>
        </authorList>
    </citation>
    <scope>NUCLEOTIDE SEQUENCE [LARGE SCALE GENOMIC DNA]</scope>
</reference>